<reference key="1">
    <citation type="journal article" date="2007" name="Genome Biol.">
        <title>Characterization and modeling of the Haemophilus influenzae core and supragenomes based on the complete genomic sequences of Rd and 12 clinical nontypeable strains.</title>
        <authorList>
            <person name="Hogg J.S."/>
            <person name="Hu F.Z."/>
            <person name="Janto B."/>
            <person name="Boissy R."/>
            <person name="Hayes J."/>
            <person name="Keefe R."/>
            <person name="Post J.C."/>
            <person name="Ehrlich G.D."/>
        </authorList>
    </citation>
    <scope>NUCLEOTIDE SEQUENCE [LARGE SCALE GENOMIC DNA]</scope>
    <source>
        <strain>PittGG</strain>
    </source>
</reference>
<proteinExistence type="inferred from homology"/>
<gene>
    <name evidence="1" type="primary">aspS</name>
    <name type="ordered locus">CGSHiGG_04400</name>
</gene>
<sequence length="588" mass="66746">MMRTHYCGALNRNNIGQDVTLSGWVHRRRDLGGLIFIDMRDRDGIVQVYFDPKYQDALTAAASLRNEFCIQIKGEVIARPENQINKNMATGEVEVLAKELRIYNASDVLPLDFNQNNTEEQRLKYRYLDLRRPEMAQRLKTRAKITSFVRRFMDDNGFLDIETPMLTKATPEGARDYLVPSRVHKGKFYALPQSPQLFKQLLMMSGFDRYYQIVKCFRDEDLRADRQPEFTQIDVETSFLTAPEVREIMERMVHGLWLDTIGVDLGKFPVMTWQEAMCRFGSDKPDLRNPLEMVDVADIVKDVEFKVFNEPANNPNGRVAVIRVPNGAEITRKQIDEYTQFVGIYGAKGLAWAKVNDINVGLEGVQSPIAKFLNEEVWKALAERVNAQTGDILFFGADKWQTTTDAMGALRLKLGRDLGLTRLDEWQPLWVIDFPMFERDEEGNLAAMHHPFTSPKDFSPEQLEADPTSAVANAYDMVINGYEVGGGSVRIFDPKMQQTVFRILGIDEEQQREKFGFLLDALKFGTPPHAGLAFGLDRLTMLLTGTENIRDVIAFPKTTAAACLMTEAPSFANPQALEELAISVVKAE</sequence>
<comment type="function">
    <text evidence="1">Catalyzes the attachment of L-aspartate to tRNA(Asp) in a two-step reaction: L-aspartate is first activated by ATP to form Asp-AMP and then transferred to the acceptor end of tRNA(Asp).</text>
</comment>
<comment type="catalytic activity">
    <reaction evidence="1">
        <text>tRNA(Asp) + L-aspartate + ATP = L-aspartyl-tRNA(Asp) + AMP + diphosphate</text>
        <dbReference type="Rhea" id="RHEA:19649"/>
        <dbReference type="Rhea" id="RHEA-COMP:9660"/>
        <dbReference type="Rhea" id="RHEA-COMP:9678"/>
        <dbReference type="ChEBI" id="CHEBI:29991"/>
        <dbReference type="ChEBI" id="CHEBI:30616"/>
        <dbReference type="ChEBI" id="CHEBI:33019"/>
        <dbReference type="ChEBI" id="CHEBI:78442"/>
        <dbReference type="ChEBI" id="CHEBI:78516"/>
        <dbReference type="ChEBI" id="CHEBI:456215"/>
        <dbReference type="EC" id="6.1.1.12"/>
    </reaction>
</comment>
<comment type="subunit">
    <text evidence="1">Homodimer.</text>
</comment>
<comment type="subcellular location">
    <subcellularLocation>
        <location evidence="1">Cytoplasm</location>
    </subcellularLocation>
</comment>
<comment type="similarity">
    <text evidence="1">Belongs to the class-II aminoacyl-tRNA synthetase family. Type 1 subfamily.</text>
</comment>
<name>SYD_HAEIG</name>
<keyword id="KW-0030">Aminoacyl-tRNA synthetase</keyword>
<keyword id="KW-0067">ATP-binding</keyword>
<keyword id="KW-0963">Cytoplasm</keyword>
<keyword id="KW-0436">Ligase</keyword>
<keyword id="KW-0547">Nucleotide-binding</keyword>
<keyword id="KW-0648">Protein biosynthesis</keyword>
<dbReference type="EC" id="6.1.1.12" evidence="1"/>
<dbReference type="EMBL" id="CP000672">
    <property type="protein sequence ID" value="ABQ99838.1"/>
    <property type="molecule type" value="Genomic_DNA"/>
</dbReference>
<dbReference type="SMR" id="A5UGD3"/>
<dbReference type="KEGG" id="hiq:CGSHiGG_04400"/>
<dbReference type="HOGENOM" id="CLU_014330_3_2_6"/>
<dbReference type="Proteomes" id="UP000001990">
    <property type="component" value="Chromosome"/>
</dbReference>
<dbReference type="GO" id="GO:0005737">
    <property type="term" value="C:cytoplasm"/>
    <property type="evidence" value="ECO:0007669"/>
    <property type="project" value="UniProtKB-SubCell"/>
</dbReference>
<dbReference type="GO" id="GO:0004815">
    <property type="term" value="F:aspartate-tRNA ligase activity"/>
    <property type="evidence" value="ECO:0007669"/>
    <property type="project" value="UniProtKB-UniRule"/>
</dbReference>
<dbReference type="GO" id="GO:0005524">
    <property type="term" value="F:ATP binding"/>
    <property type="evidence" value="ECO:0007669"/>
    <property type="project" value="UniProtKB-UniRule"/>
</dbReference>
<dbReference type="GO" id="GO:0003676">
    <property type="term" value="F:nucleic acid binding"/>
    <property type="evidence" value="ECO:0007669"/>
    <property type="project" value="InterPro"/>
</dbReference>
<dbReference type="GO" id="GO:0006422">
    <property type="term" value="P:aspartyl-tRNA aminoacylation"/>
    <property type="evidence" value="ECO:0007669"/>
    <property type="project" value="UniProtKB-UniRule"/>
</dbReference>
<dbReference type="CDD" id="cd00777">
    <property type="entry name" value="AspRS_core"/>
    <property type="match status" value="1"/>
</dbReference>
<dbReference type="CDD" id="cd04317">
    <property type="entry name" value="EcAspRS_like_N"/>
    <property type="match status" value="1"/>
</dbReference>
<dbReference type="FunFam" id="2.40.50.140:FF:000080">
    <property type="entry name" value="Aspartate--tRNA ligase"/>
    <property type="match status" value="1"/>
</dbReference>
<dbReference type="Gene3D" id="3.30.930.10">
    <property type="entry name" value="Bira Bifunctional Protein, Domain 2"/>
    <property type="match status" value="1"/>
</dbReference>
<dbReference type="Gene3D" id="3.30.1360.30">
    <property type="entry name" value="GAD-like domain"/>
    <property type="match status" value="1"/>
</dbReference>
<dbReference type="Gene3D" id="2.40.50.140">
    <property type="entry name" value="Nucleic acid-binding proteins"/>
    <property type="match status" value="1"/>
</dbReference>
<dbReference type="HAMAP" id="MF_00044">
    <property type="entry name" value="Asp_tRNA_synth_type1"/>
    <property type="match status" value="1"/>
</dbReference>
<dbReference type="InterPro" id="IPR004364">
    <property type="entry name" value="Aa-tRNA-synt_II"/>
</dbReference>
<dbReference type="InterPro" id="IPR006195">
    <property type="entry name" value="aa-tRNA-synth_II"/>
</dbReference>
<dbReference type="InterPro" id="IPR045864">
    <property type="entry name" value="aa-tRNA-synth_II/BPL/LPL"/>
</dbReference>
<dbReference type="InterPro" id="IPR004524">
    <property type="entry name" value="Asp-tRNA-ligase_1"/>
</dbReference>
<dbReference type="InterPro" id="IPR047089">
    <property type="entry name" value="Asp-tRNA-ligase_1_N"/>
</dbReference>
<dbReference type="InterPro" id="IPR002312">
    <property type="entry name" value="Asp/Asn-tRNA-synth_IIb"/>
</dbReference>
<dbReference type="InterPro" id="IPR047090">
    <property type="entry name" value="AspRS_core"/>
</dbReference>
<dbReference type="InterPro" id="IPR004115">
    <property type="entry name" value="GAD-like_sf"/>
</dbReference>
<dbReference type="InterPro" id="IPR029351">
    <property type="entry name" value="GAD_dom"/>
</dbReference>
<dbReference type="InterPro" id="IPR012340">
    <property type="entry name" value="NA-bd_OB-fold"/>
</dbReference>
<dbReference type="InterPro" id="IPR004365">
    <property type="entry name" value="NA-bd_OB_tRNA"/>
</dbReference>
<dbReference type="NCBIfam" id="TIGR00459">
    <property type="entry name" value="aspS_bact"/>
    <property type="match status" value="1"/>
</dbReference>
<dbReference type="NCBIfam" id="NF001750">
    <property type="entry name" value="PRK00476.1"/>
    <property type="match status" value="1"/>
</dbReference>
<dbReference type="PANTHER" id="PTHR22594:SF5">
    <property type="entry name" value="ASPARTATE--TRNA LIGASE, MITOCHONDRIAL"/>
    <property type="match status" value="1"/>
</dbReference>
<dbReference type="PANTHER" id="PTHR22594">
    <property type="entry name" value="ASPARTYL/LYSYL-TRNA SYNTHETASE"/>
    <property type="match status" value="1"/>
</dbReference>
<dbReference type="Pfam" id="PF02938">
    <property type="entry name" value="GAD"/>
    <property type="match status" value="1"/>
</dbReference>
<dbReference type="Pfam" id="PF00152">
    <property type="entry name" value="tRNA-synt_2"/>
    <property type="match status" value="1"/>
</dbReference>
<dbReference type="Pfam" id="PF01336">
    <property type="entry name" value="tRNA_anti-codon"/>
    <property type="match status" value="1"/>
</dbReference>
<dbReference type="PRINTS" id="PR01042">
    <property type="entry name" value="TRNASYNTHASP"/>
</dbReference>
<dbReference type="SUPFAM" id="SSF55681">
    <property type="entry name" value="Class II aaRS and biotin synthetases"/>
    <property type="match status" value="1"/>
</dbReference>
<dbReference type="SUPFAM" id="SSF55261">
    <property type="entry name" value="GAD domain-like"/>
    <property type="match status" value="1"/>
</dbReference>
<dbReference type="SUPFAM" id="SSF50249">
    <property type="entry name" value="Nucleic acid-binding proteins"/>
    <property type="match status" value="1"/>
</dbReference>
<dbReference type="PROSITE" id="PS50862">
    <property type="entry name" value="AA_TRNA_LIGASE_II"/>
    <property type="match status" value="1"/>
</dbReference>
<protein>
    <recommendedName>
        <fullName evidence="1">Aspartate--tRNA ligase</fullName>
        <ecNumber evidence="1">6.1.1.12</ecNumber>
    </recommendedName>
    <alternativeName>
        <fullName evidence="1">Aspartyl-tRNA synthetase</fullName>
        <shortName evidence="1">AspRS</shortName>
    </alternativeName>
</protein>
<accession>A5UGD3</accession>
<evidence type="ECO:0000255" key="1">
    <source>
        <dbReference type="HAMAP-Rule" id="MF_00044"/>
    </source>
</evidence>
<organism>
    <name type="scientific">Haemophilus influenzae (strain PittGG)</name>
    <dbReference type="NCBI Taxonomy" id="374931"/>
    <lineage>
        <taxon>Bacteria</taxon>
        <taxon>Pseudomonadati</taxon>
        <taxon>Pseudomonadota</taxon>
        <taxon>Gammaproteobacteria</taxon>
        <taxon>Pasteurellales</taxon>
        <taxon>Pasteurellaceae</taxon>
        <taxon>Haemophilus</taxon>
    </lineage>
</organism>
<feature type="chain" id="PRO_1000006682" description="Aspartate--tRNA ligase">
    <location>
        <begin position="1"/>
        <end position="588"/>
    </location>
</feature>
<feature type="region of interest" description="Aspartate" evidence="1">
    <location>
        <begin position="196"/>
        <end position="199"/>
    </location>
</feature>
<feature type="binding site" evidence="1">
    <location>
        <position position="172"/>
    </location>
    <ligand>
        <name>L-aspartate</name>
        <dbReference type="ChEBI" id="CHEBI:29991"/>
    </ligand>
</feature>
<feature type="binding site" evidence="1">
    <location>
        <begin position="218"/>
        <end position="220"/>
    </location>
    <ligand>
        <name>ATP</name>
        <dbReference type="ChEBI" id="CHEBI:30616"/>
    </ligand>
</feature>
<feature type="binding site" evidence="1">
    <location>
        <position position="218"/>
    </location>
    <ligand>
        <name>L-aspartate</name>
        <dbReference type="ChEBI" id="CHEBI:29991"/>
    </ligand>
</feature>
<feature type="binding site" evidence="1">
    <location>
        <position position="227"/>
    </location>
    <ligand>
        <name>ATP</name>
        <dbReference type="ChEBI" id="CHEBI:30616"/>
    </ligand>
</feature>
<feature type="binding site" evidence="1">
    <location>
        <position position="449"/>
    </location>
    <ligand>
        <name>L-aspartate</name>
        <dbReference type="ChEBI" id="CHEBI:29991"/>
    </ligand>
</feature>
<feature type="binding site" evidence="1">
    <location>
        <position position="483"/>
    </location>
    <ligand>
        <name>ATP</name>
        <dbReference type="ChEBI" id="CHEBI:30616"/>
    </ligand>
</feature>
<feature type="binding site" evidence="1">
    <location>
        <position position="490"/>
    </location>
    <ligand>
        <name>L-aspartate</name>
        <dbReference type="ChEBI" id="CHEBI:29991"/>
    </ligand>
</feature>
<feature type="binding site" evidence="1">
    <location>
        <begin position="535"/>
        <end position="538"/>
    </location>
    <ligand>
        <name>ATP</name>
        <dbReference type="ChEBI" id="CHEBI:30616"/>
    </ligand>
</feature>